<proteinExistence type="evidence at transcript level"/>
<comment type="function">
    <text evidence="1 3">Translation factor that promotes translation elongation and termination, particularly upon ribosome stalling at specific amino acid sequence contexts. Binds between the exit (E) and peptidyl (P) site of the ribosome and promotes rescue of stalled ribosome: specifically required for efficient translation of polyproline-containing peptides as well as other motifs that stall the ribosome. Acts as a ribosome quality control (RQC) cofactor by joining the RQC complex to facilitate peptidyl transfer during CAT tailing step (By similarity). Functions as a regulator of autophagy (PubMed:19546244).</text>
</comment>
<comment type="subcellular location">
    <subcellularLocation>
        <location evidence="1">Cytoplasm</location>
    </subcellularLocation>
</comment>
<comment type="PTM">
    <text evidence="2 3">Lys-51 undergoes hypusination, a unique post-translational modification that consists in the addition of a butylamino group from spermidine to lysine side chain, leading to the formation of the unusual amino acid hypusine. eIF-5As are the only known proteins to undergo this modification, which is essential for their function.</text>
</comment>
<comment type="disruption phenotype">
    <text evidence="3">Severe larval growth defect.</text>
</comment>
<comment type="similarity">
    <text evidence="4">Belongs to the eIF-5A family.</text>
</comment>
<gene>
    <name evidence="6" type="primary">eEF5</name>
    <name evidence="6" type="ORF">CG3186</name>
</gene>
<feature type="chain" id="PRO_0000142460" description="Eukaryotic translation initiation factor 5A">
    <location>
        <begin position="1"/>
        <end position="159"/>
    </location>
</feature>
<feature type="modified residue" description="Hypusine" evidence="2">
    <location>
        <position position="51"/>
    </location>
</feature>
<feature type="sequence conflict" description="In Ref. 1; AAF80375 and 2; AAG17032." evidence="4" ref="1 2">
    <original>Q</original>
    <variation>H</variation>
    <location>
        <position position="7"/>
    </location>
</feature>
<feature type="sequence conflict" description="In Ref. 2; AAG17032." evidence="4" ref="2">
    <original>E</original>
    <variation>D</variation>
    <location>
        <position position="106"/>
    </location>
</feature>
<protein>
    <recommendedName>
        <fullName>Eukaryotic translation initiation factor 5A</fullName>
        <shortName>eIF-5A</shortName>
    </recommendedName>
</protein>
<accession>Q9GU68</accession>
<accession>A0A1B2AK02</accession>
<accession>Q2MGM4</accession>
<accession>Q9NDH0</accession>
<accession>Q9W1C0</accession>
<dbReference type="EMBL" id="AF159443">
    <property type="protein sequence ID" value="AAF80375.1"/>
    <property type="molecule type" value="mRNA"/>
</dbReference>
<dbReference type="EMBL" id="AF187730">
    <property type="protein sequence ID" value="AAG17032.1"/>
    <property type="molecule type" value="mRNA"/>
</dbReference>
<dbReference type="EMBL" id="AE013599">
    <property type="protein sequence ID" value="AAF47151.1"/>
    <property type="molecule type" value="Genomic_DNA"/>
</dbReference>
<dbReference type="EMBL" id="AY071396">
    <property type="protein sequence ID" value="AAL49018.1"/>
    <property type="molecule type" value="mRNA"/>
</dbReference>
<dbReference type="EMBL" id="KX531679">
    <property type="protein sequence ID" value="ANY27489.1"/>
    <property type="molecule type" value="mRNA"/>
</dbReference>
<dbReference type="RefSeq" id="NP_611878.1">
    <property type="nucleotide sequence ID" value="NM_138034.3"/>
</dbReference>
<dbReference type="RefSeq" id="NP_726411.1">
    <property type="nucleotide sequence ID" value="NM_166654.2"/>
</dbReference>
<dbReference type="SMR" id="Q9GU68"/>
<dbReference type="BioGRID" id="63427">
    <property type="interactions" value="54"/>
</dbReference>
<dbReference type="DIP" id="DIP-17842N"/>
<dbReference type="FunCoup" id="Q9GU68">
    <property type="interactions" value="1327"/>
</dbReference>
<dbReference type="IntAct" id="Q9GU68">
    <property type="interactions" value="111"/>
</dbReference>
<dbReference type="STRING" id="7227.FBpp0072082"/>
<dbReference type="PaxDb" id="7227-FBpp0072081"/>
<dbReference type="ABCD" id="Q9GU68">
    <property type="antibodies" value="1 sequenced antibody"/>
</dbReference>
<dbReference type="DNASU" id="37846"/>
<dbReference type="EnsemblMetazoa" id="FBtr0072172">
    <property type="protein sequence ID" value="FBpp0072081"/>
    <property type="gene ID" value="FBgn0285952"/>
</dbReference>
<dbReference type="EnsemblMetazoa" id="FBtr0072173">
    <property type="protein sequence ID" value="FBpp0072082"/>
    <property type="gene ID" value="FBgn0285952"/>
</dbReference>
<dbReference type="GeneID" id="37846"/>
<dbReference type="KEGG" id="dme:Dmel_CG3186"/>
<dbReference type="UCSC" id="CG3186-RA">
    <property type="organism name" value="d. melanogaster"/>
</dbReference>
<dbReference type="AGR" id="FB:FBgn0285952"/>
<dbReference type="CTD" id="37846"/>
<dbReference type="FlyBase" id="FBgn0285952">
    <property type="gene designation" value="eEF5"/>
</dbReference>
<dbReference type="VEuPathDB" id="VectorBase:FBgn0285952"/>
<dbReference type="eggNOG" id="KOG3271">
    <property type="taxonomic scope" value="Eukaryota"/>
</dbReference>
<dbReference type="GeneTree" id="ENSGT00390000003738"/>
<dbReference type="HOGENOM" id="CLU_102600_0_0_1"/>
<dbReference type="InParanoid" id="Q9GU68"/>
<dbReference type="OMA" id="KDDVRMP"/>
<dbReference type="OrthoDB" id="9975114at2759"/>
<dbReference type="PhylomeDB" id="Q9GU68"/>
<dbReference type="Reactome" id="R-DME-204626">
    <property type="pathway name" value="Hypusine synthesis from eIF5A-lysine"/>
</dbReference>
<dbReference type="SignaLink" id="Q9GU68"/>
<dbReference type="BioGRID-ORCS" id="37846">
    <property type="hits" value="1 hit in 3 CRISPR screens"/>
</dbReference>
<dbReference type="ChiTaRS" id="eIF-5A">
    <property type="organism name" value="fly"/>
</dbReference>
<dbReference type="GenomeRNAi" id="37846"/>
<dbReference type="PRO" id="PR:Q9GU68"/>
<dbReference type="Proteomes" id="UP000000803">
    <property type="component" value="Chromosome 2R"/>
</dbReference>
<dbReference type="Bgee" id="FBgn0285952">
    <property type="expression patterns" value="Expressed in thoracico-abdominal ganglion (Drosophila) and 287 other cell types or tissues"/>
</dbReference>
<dbReference type="GO" id="GO:0005737">
    <property type="term" value="C:cytoplasm"/>
    <property type="evidence" value="ECO:0000250"/>
    <property type="project" value="FlyBase"/>
</dbReference>
<dbReference type="GO" id="GO:0043022">
    <property type="term" value="F:ribosome binding"/>
    <property type="evidence" value="ECO:0007669"/>
    <property type="project" value="InterPro"/>
</dbReference>
<dbReference type="GO" id="GO:0003723">
    <property type="term" value="F:RNA binding"/>
    <property type="evidence" value="ECO:0007669"/>
    <property type="project" value="UniProtKB-KW"/>
</dbReference>
<dbReference type="GO" id="GO:0003746">
    <property type="term" value="F:translation elongation factor activity"/>
    <property type="evidence" value="ECO:0000315"/>
    <property type="project" value="UniProtKB"/>
</dbReference>
<dbReference type="GO" id="GO:0002181">
    <property type="term" value="P:cytoplasmic translation"/>
    <property type="evidence" value="ECO:0000315"/>
    <property type="project" value="UniProtKB"/>
</dbReference>
<dbReference type="GO" id="GO:0045901">
    <property type="term" value="P:positive regulation of translational elongation"/>
    <property type="evidence" value="ECO:0000250"/>
    <property type="project" value="FlyBase"/>
</dbReference>
<dbReference type="GO" id="GO:0045905">
    <property type="term" value="P:positive regulation of translational termination"/>
    <property type="evidence" value="ECO:0007669"/>
    <property type="project" value="InterPro"/>
</dbReference>
<dbReference type="GO" id="GO:0019953">
    <property type="term" value="P:sexual reproduction"/>
    <property type="evidence" value="ECO:0000270"/>
    <property type="project" value="FlyBase"/>
</dbReference>
<dbReference type="GO" id="GO:0006414">
    <property type="term" value="P:translational elongation"/>
    <property type="evidence" value="ECO:0000318"/>
    <property type="project" value="GO_Central"/>
</dbReference>
<dbReference type="CDD" id="cd04468">
    <property type="entry name" value="S1_eIF5A"/>
    <property type="match status" value="1"/>
</dbReference>
<dbReference type="FunFam" id="2.30.30.30:FF:000007">
    <property type="entry name" value="Eukaryotic translation initiation factor 5A"/>
    <property type="match status" value="1"/>
</dbReference>
<dbReference type="FunFam" id="2.40.50.140:FF:000034">
    <property type="entry name" value="Eukaryotic translation initiation factor 5A"/>
    <property type="match status" value="1"/>
</dbReference>
<dbReference type="Gene3D" id="2.30.30.30">
    <property type="match status" value="1"/>
</dbReference>
<dbReference type="Gene3D" id="2.40.50.140">
    <property type="entry name" value="Nucleic acid-binding proteins"/>
    <property type="match status" value="1"/>
</dbReference>
<dbReference type="InterPro" id="IPR001884">
    <property type="entry name" value="IF5A-like"/>
</dbReference>
<dbReference type="InterPro" id="IPR048670">
    <property type="entry name" value="IF5A-like_N"/>
</dbReference>
<dbReference type="InterPro" id="IPR012340">
    <property type="entry name" value="NA-bd_OB-fold"/>
</dbReference>
<dbReference type="InterPro" id="IPR014722">
    <property type="entry name" value="Rib_uL2_dom2"/>
</dbReference>
<dbReference type="InterPro" id="IPR019769">
    <property type="entry name" value="Trans_elong_IF5A_hypusine_site"/>
</dbReference>
<dbReference type="InterPro" id="IPR020189">
    <property type="entry name" value="Transl_elong_IF5A_C"/>
</dbReference>
<dbReference type="InterPro" id="IPR008991">
    <property type="entry name" value="Translation_prot_SH3-like_sf"/>
</dbReference>
<dbReference type="NCBIfam" id="TIGR00037">
    <property type="entry name" value="eIF_5A"/>
    <property type="match status" value="1"/>
</dbReference>
<dbReference type="PANTHER" id="PTHR11673">
    <property type="entry name" value="TRANSLATION INITIATION FACTOR 5A FAMILY MEMBER"/>
    <property type="match status" value="1"/>
</dbReference>
<dbReference type="Pfam" id="PF01287">
    <property type="entry name" value="eIF-5a"/>
    <property type="match status" value="1"/>
</dbReference>
<dbReference type="Pfam" id="PF21485">
    <property type="entry name" value="IF5A-like_N"/>
    <property type="match status" value="1"/>
</dbReference>
<dbReference type="PIRSF" id="PIRSF003025">
    <property type="entry name" value="eIF5A"/>
    <property type="match status" value="1"/>
</dbReference>
<dbReference type="SMART" id="SM01376">
    <property type="entry name" value="eIF-5a"/>
    <property type="match status" value="1"/>
</dbReference>
<dbReference type="SUPFAM" id="SSF50249">
    <property type="entry name" value="Nucleic acid-binding proteins"/>
    <property type="match status" value="1"/>
</dbReference>
<dbReference type="SUPFAM" id="SSF50104">
    <property type="entry name" value="Translation proteins SH3-like domain"/>
    <property type="match status" value="1"/>
</dbReference>
<dbReference type="PROSITE" id="PS00302">
    <property type="entry name" value="IF5A_HYPUSINE"/>
    <property type="match status" value="1"/>
</dbReference>
<evidence type="ECO:0000250" key="1">
    <source>
        <dbReference type="UniProtKB" id="P23301"/>
    </source>
</evidence>
<evidence type="ECO:0000250" key="2">
    <source>
        <dbReference type="UniProtKB" id="P63241"/>
    </source>
</evidence>
<evidence type="ECO:0000269" key="3">
    <source>
    </source>
</evidence>
<evidence type="ECO:0000305" key="4"/>
<evidence type="ECO:0000312" key="5">
    <source>
        <dbReference type="EMBL" id="ANY27489.1"/>
    </source>
</evidence>
<evidence type="ECO:0000312" key="6">
    <source>
        <dbReference type="FlyBase" id="FBgn0285952"/>
    </source>
</evidence>
<name>IF5A_DROME</name>
<reference key="1">
    <citation type="submission" date="1999-06" db="EMBL/GenBank/DDBJ databases">
        <title>Drosophila melanogaster eukaryotic initiation factor 5A.</title>
        <authorList>
            <person name="Posey K.L."/>
            <person name="Roman G."/>
            <person name="He J."/>
            <person name="Cerda R."/>
            <person name="Davis R.L."/>
            <person name="Hardin S.H."/>
        </authorList>
    </citation>
    <scope>NUCLEOTIDE SEQUENCE [MRNA]</scope>
</reference>
<reference key="2">
    <citation type="submission" date="1999-09" db="EMBL/GenBank/DDBJ databases">
        <title>Drosophila homolog of eIF-5a.</title>
        <authorList>
            <person name="Irion U."/>
            <person name="Leptin M."/>
        </authorList>
    </citation>
    <scope>NUCLEOTIDE SEQUENCE [MRNA]</scope>
</reference>
<reference key="3">
    <citation type="journal article" date="2000" name="Science">
        <title>The genome sequence of Drosophila melanogaster.</title>
        <authorList>
            <person name="Adams M.D."/>
            <person name="Celniker S.E."/>
            <person name="Holt R.A."/>
            <person name="Evans C.A."/>
            <person name="Gocayne J.D."/>
            <person name="Amanatides P.G."/>
            <person name="Scherer S.E."/>
            <person name="Li P.W."/>
            <person name="Hoskins R.A."/>
            <person name="Galle R.F."/>
            <person name="George R.A."/>
            <person name="Lewis S.E."/>
            <person name="Richards S."/>
            <person name="Ashburner M."/>
            <person name="Henderson S.N."/>
            <person name="Sutton G.G."/>
            <person name="Wortman J.R."/>
            <person name="Yandell M.D."/>
            <person name="Zhang Q."/>
            <person name="Chen L.X."/>
            <person name="Brandon R.C."/>
            <person name="Rogers Y.-H.C."/>
            <person name="Blazej R.G."/>
            <person name="Champe M."/>
            <person name="Pfeiffer B.D."/>
            <person name="Wan K.H."/>
            <person name="Doyle C."/>
            <person name="Baxter E.G."/>
            <person name="Helt G."/>
            <person name="Nelson C.R."/>
            <person name="Miklos G.L.G."/>
            <person name="Abril J.F."/>
            <person name="Agbayani A."/>
            <person name="An H.-J."/>
            <person name="Andrews-Pfannkoch C."/>
            <person name="Baldwin D."/>
            <person name="Ballew R.M."/>
            <person name="Basu A."/>
            <person name="Baxendale J."/>
            <person name="Bayraktaroglu L."/>
            <person name="Beasley E.M."/>
            <person name="Beeson K.Y."/>
            <person name="Benos P.V."/>
            <person name="Berman B.P."/>
            <person name="Bhandari D."/>
            <person name="Bolshakov S."/>
            <person name="Borkova D."/>
            <person name="Botchan M.R."/>
            <person name="Bouck J."/>
            <person name="Brokstein P."/>
            <person name="Brottier P."/>
            <person name="Burtis K.C."/>
            <person name="Busam D.A."/>
            <person name="Butler H."/>
            <person name="Cadieu E."/>
            <person name="Center A."/>
            <person name="Chandra I."/>
            <person name="Cherry J.M."/>
            <person name="Cawley S."/>
            <person name="Dahlke C."/>
            <person name="Davenport L.B."/>
            <person name="Davies P."/>
            <person name="de Pablos B."/>
            <person name="Delcher A."/>
            <person name="Deng Z."/>
            <person name="Mays A.D."/>
            <person name="Dew I."/>
            <person name="Dietz S.M."/>
            <person name="Dodson K."/>
            <person name="Doup L.E."/>
            <person name="Downes M."/>
            <person name="Dugan-Rocha S."/>
            <person name="Dunkov B.C."/>
            <person name="Dunn P."/>
            <person name="Durbin K.J."/>
            <person name="Evangelista C.C."/>
            <person name="Ferraz C."/>
            <person name="Ferriera S."/>
            <person name="Fleischmann W."/>
            <person name="Fosler C."/>
            <person name="Gabrielian A.E."/>
            <person name="Garg N.S."/>
            <person name="Gelbart W.M."/>
            <person name="Glasser K."/>
            <person name="Glodek A."/>
            <person name="Gong F."/>
            <person name="Gorrell J.H."/>
            <person name="Gu Z."/>
            <person name="Guan P."/>
            <person name="Harris M."/>
            <person name="Harris N.L."/>
            <person name="Harvey D.A."/>
            <person name="Heiman T.J."/>
            <person name="Hernandez J.R."/>
            <person name="Houck J."/>
            <person name="Hostin D."/>
            <person name="Houston K.A."/>
            <person name="Howland T.J."/>
            <person name="Wei M.-H."/>
            <person name="Ibegwam C."/>
            <person name="Jalali M."/>
            <person name="Kalush F."/>
            <person name="Karpen G.H."/>
            <person name="Ke Z."/>
            <person name="Kennison J.A."/>
            <person name="Ketchum K.A."/>
            <person name="Kimmel B.E."/>
            <person name="Kodira C.D."/>
            <person name="Kraft C.L."/>
            <person name="Kravitz S."/>
            <person name="Kulp D."/>
            <person name="Lai Z."/>
            <person name="Lasko P."/>
            <person name="Lei Y."/>
            <person name="Levitsky A.A."/>
            <person name="Li J.H."/>
            <person name="Li Z."/>
            <person name="Liang Y."/>
            <person name="Lin X."/>
            <person name="Liu X."/>
            <person name="Mattei B."/>
            <person name="McIntosh T.C."/>
            <person name="McLeod M.P."/>
            <person name="McPherson D."/>
            <person name="Merkulov G."/>
            <person name="Milshina N.V."/>
            <person name="Mobarry C."/>
            <person name="Morris J."/>
            <person name="Moshrefi A."/>
            <person name="Mount S.M."/>
            <person name="Moy M."/>
            <person name="Murphy B."/>
            <person name="Murphy L."/>
            <person name="Muzny D.M."/>
            <person name="Nelson D.L."/>
            <person name="Nelson D.R."/>
            <person name="Nelson K.A."/>
            <person name="Nixon K."/>
            <person name="Nusskern D.R."/>
            <person name="Pacleb J.M."/>
            <person name="Palazzolo M."/>
            <person name="Pittman G.S."/>
            <person name="Pan S."/>
            <person name="Pollard J."/>
            <person name="Puri V."/>
            <person name="Reese M.G."/>
            <person name="Reinert K."/>
            <person name="Remington K."/>
            <person name="Saunders R.D.C."/>
            <person name="Scheeler F."/>
            <person name="Shen H."/>
            <person name="Shue B.C."/>
            <person name="Siden-Kiamos I."/>
            <person name="Simpson M."/>
            <person name="Skupski M.P."/>
            <person name="Smith T.J."/>
            <person name="Spier E."/>
            <person name="Spradling A.C."/>
            <person name="Stapleton M."/>
            <person name="Strong R."/>
            <person name="Sun E."/>
            <person name="Svirskas R."/>
            <person name="Tector C."/>
            <person name="Turner R."/>
            <person name="Venter E."/>
            <person name="Wang A.H."/>
            <person name="Wang X."/>
            <person name="Wang Z.-Y."/>
            <person name="Wassarman D.A."/>
            <person name="Weinstock G.M."/>
            <person name="Weissenbach J."/>
            <person name="Williams S.M."/>
            <person name="Woodage T."/>
            <person name="Worley K.C."/>
            <person name="Wu D."/>
            <person name="Yang S."/>
            <person name="Yao Q.A."/>
            <person name="Ye J."/>
            <person name="Yeh R.-F."/>
            <person name="Zaveri J.S."/>
            <person name="Zhan M."/>
            <person name="Zhang G."/>
            <person name="Zhao Q."/>
            <person name="Zheng L."/>
            <person name="Zheng X.H."/>
            <person name="Zhong F.N."/>
            <person name="Zhong W."/>
            <person name="Zhou X."/>
            <person name="Zhu S.C."/>
            <person name="Zhu X."/>
            <person name="Smith H.O."/>
            <person name="Gibbs R.A."/>
            <person name="Myers E.W."/>
            <person name="Rubin G.M."/>
            <person name="Venter J.C."/>
        </authorList>
    </citation>
    <scope>NUCLEOTIDE SEQUENCE [LARGE SCALE GENOMIC DNA]</scope>
    <source>
        <strain>Berkeley</strain>
    </source>
</reference>
<reference key="4">
    <citation type="journal article" date="2002" name="Genome Biol.">
        <title>Annotation of the Drosophila melanogaster euchromatic genome: a systematic review.</title>
        <authorList>
            <person name="Misra S."/>
            <person name="Crosby M.A."/>
            <person name="Mungall C.J."/>
            <person name="Matthews B.B."/>
            <person name="Campbell K.S."/>
            <person name="Hradecky P."/>
            <person name="Huang Y."/>
            <person name="Kaminker J.S."/>
            <person name="Millburn G.H."/>
            <person name="Prochnik S.E."/>
            <person name="Smith C.D."/>
            <person name="Tupy J.L."/>
            <person name="Whitfield E.J."/>
            <person name="Bayraktaroglu L."/>
            <person name="Berman B.P."/>
            <person name="Bettencourt B.R."/>
            <person name="Celniker S.E."/>
            <person name="de Grey A.D.N.J."/>
            <person name="Drysdale R.A."/>
            <person name="Harris N.L."/>
            <person name="Richter J."/>
            <person name="Russo S."/>
            <person name="Schroeder A.J."/>
            <person name="Shu S.Q."/>
            <person name="Stapleton M."/>
            <person name="Yamada C."/>
            <person name="Ashburner M."/>
            <person name="Gelbart W.M."/>
            <person name="Rubin G.M."/>
            <person name="Lewis S.E."/>
        </authorList>
    </citation>
    <scope>GENOME REANNOTATION</scope>
    <source>
        <strain>Berkeley</strain>
    </source>
</reference>
<reference key="5">
    <citation type="journal article" date="2002" name="Genome Biol.">
        <title>A Drosophila full-length cDNA resource.</title>
        <authorList>
            <person name="Stapleton M."/>
            <person name="Carlson J.W."/>
            <person name="Brokstein P."/>
            <person name="Yu C."/>
            <person name="Champe M."/>
            <person name="George R.A."/>
            <person name="Guarin H."/>
            <person name="Kronmiller B."/>
            <person name="Pacleb J.M."/>
            <person name="Park S."/>
            <person name="Wan K.H."/>
            <person name="Rubin G.M."/>
            <person name="Celniker S.E."/>
        </authorList>
    </citation>
    <scope>NUCLEOTIDE SEQUENCE [LARGE SCALE MRNA]</scope>
    <source>
        <strain>Berkeley</strain>
        <tissue>Embryo</tissue>
    </source>
</reference>
<reference evidence="5" key="6">
    <citation type="submission" date="2016-07" db="EMBL/GenBank/DDBJ databases">
        <authorList>
            <person name="Florea S."/>
            <person name="Webb J.S."/>
            <person name="Jaromczyk J."/>
            <person name="Schardl C.L."/>
        </authorList>
    </citation>
    <scope>NUCLEOTIDE SEQUENCE [LARGE SCALE MRNA]</scope>
</reference>
<reference key="7">
    <citation type="journal article" date="2009" name="J. Cell Biol.">
        <title>The Drosophila deoxyhypusine hydroxylase homologue nero and its target eIF5A are required for cell growth and the regulation of autophagy.</title>
        <authorList>
            <person name="Patel P.H."/>
            <person name="Costa-Mattioli M."/>
            <person name="Schulze K.L."/>
            <person name="Bellen H.J."/>
        </authorList>
    </citation>
    <scope>FUNCTION</scope>
    <scope>DISRUPTION PHENOTYPE</scope>
</reference>
<keyword id="KW-0963">Cytoplasm</keyword>
<keyword id="KW-0251">Elongation factor</keyword>
<keyword id="KW-0385">Hypusine</keyword>
<keyword id="KW-0648">Protein biosynthesis</keyword>
<keyword id="KW-1185">Reference proteome</keyword>
<keyword id="KW-0694">RNA-binding</keyword>
<organism>
    <name type="scientific">Drosophila melanogaster</name>
    <name type="common">Fruit fly</name>
    <dbReference type="NCBI Taxonomy" id="7227"/>
    <lineage>
        <taxon>Eukaryota</taxon>
        <taxon>Metazoa</taxon>
        <taxon>Ecdysozoa</taxon>
        <taxon>Arthropoda</taxon>
        <taxon>Hexapoda</taxon>
        <taxon>Insecta</taxon>
        <taxon>Pterygota</taxon>
        <taxon>Neoptera</taxon>
        <taxon>Endopterygota</taxon>
        <taxon>Diptera</taxon>
        <taxon>Brachycera</taxon>
        <taxon>Muscomorpha</taxon>
        <taxon>Ephydroidea</taxon>
        <taxon>Drosophilidae</taxon>
        <taxon>Drosophila</taxon>
        <taxon>Sophophora</taxon>
    </lineage>
</organism>
<sequence length="159" mass="17591">MAELDDQFETTDSGASTTYPMQCSALRKNGFVMLKSRPCKIVEMSTSKTGKHGHAKVHMVGIDIFSNKKYEDICPSTHNMDVPNVKREDLQLIAISDDSFLTLMTESGDLREDLKVPEGELGEQLRLDFDSGKDLLCTVLKACGEECVIAIKTNTALDK</sequence>